<protein>
    <recommendedName>
        <fullName evidence="1">Putative N-acetylmannosamine-6-phosphate 2-epimerase</fullName>
        <ecNumber evidence="1">5.1.3.9</ecNumber>
    </recommendedName>
    <alternativeName>
        <fullName evidence="1">ManNAc-6-P epimerase</fullName>
    </alternativeName>
</protein>
<proteinExistence type="inferred from homology"/>
<name>NANE_SHIF8</name>
<sequence>MSLLAQLDQKIAANGGLIVSCQPVPDSPLDKPEIVAAMALAAEQAGAVAIRIEGVANLQATRAVVSVPIIGIVKRDLEDSPVRITAYIEDVDALAQAGADIIAIDGTDRPRPVPVETLLARIHHHGLLAMTDCSTPEDGLACQKLGAEIIGTTLSGYTTPETPEEPDLALVKTLSEAGCRVIAEGRYNTPAQAADAMRHGAWAVTVGSAITRLEHICQWYNTAMKKAVL</sequence>
<keyword id="KW-0119">Carbohydrate metabolism</keyword>
<keyword id="KW-0413">Isomerase</keyword>
<reference key="1">
    <citation type="journal article" date="2006" name="BMC Genomics">
        <title>Complete genome sequence of Shigella flexneri 5b and comparison with Shigella flexneri 2a.</title>
        <authorList>
            <person name="Nie H."/>
            <person name="Yang F."/>
            <person name="Zhang X."/>
            <person name="Yang J."/>
            <person name="Chen L."/>
            <person name="Wang J."/>
            <person name="Xiong Z."/>
            <person name="Peng J."/>
            <person name="Sun L."/>
            <person name="Dong J."/>
            <person name="Xue Y."/>
            <person name="Xu X."/>
            <person name="Chen S."/>
            <person name="Yao Z."/>
            <person name="Shen Y."/>
            <person name="Jin Q."/>
        </authorList>
    </citation>
    <scope>NUCLEOTIDE SEQUENCE [LARGE SCALE GENOMIC DNA]</scope>
    <source>
        <strain>8401</strain>
    </source>
</reference>
<evidence type="ECO:0000255" key="1">
    <source>
        <dbReference type="HAMAP-Rule" id="MF_01235"/>
    </source>
</evidence>
<feature type="chain" id="PRO_0000301482" description="Putative N-acetylmannosamine-6-phosphate 2-epimerase">
    <location>
        <begin position="1"/>
        <end position="229"/>
    </location>
</feature>
<organism>
    <name type="scientific">Shigella flexneri serotype 5b (strain 8401)</name>
    <dbReference type="NCBI Taxonomy" id="373384"/>
    <lineage>
        <taxon>Bacteria</taxon>
        <taxon>Pseudomonadati</taxon>
        <taxon>Pseudomonadota</taxon>
        <taxon>Gammaproteobacteria</taxon>
        <taxon>Enterobacterales</taxon>
        <taxon>Enterobacteriaceae</taxon>
        <taxon>Shigella</taxon>
    </lineage>
</organism>
<comment type="function">
    <text evidence="1">Converts N-acetylmannosamine-6-phosphate (ManNAc-6-P) to N-acetylglucosamine-6-phosphate (GlcNAc-6-P).</text>
</comment>
<comment type="catalytic activity">
    <reaction evidence="1">
        <text>an N-acyl-D-glucosamine 6-phosphate = an N-acyl-D-mannosamine 6-phosphate</text>
        <dbReference type="Rhea" id="RHEA:23932"/>
        <dbReference type="ChEBI" id="CHEBI:57599"/>
        <dbReference type="ChEBI" id="CHEBI:57666"/>
        <dbReference type="EC" id="5.1.3.9"/>
    </reaction>
</comment>
<comment type="pathway">
    <text evidence="1">Amino-sugar metabolism; N-acetylneuraminate degradation; D-fructose 6-phosphate from N-acetylneuraminate: step 3/5.</text>
</comment>
<comment type="similarity">
    <text evidence="1">Belongs to the NanE family.</text>
</comment>
<accession>Q0T067</accession>
<dbReference type="EC" id="5.1.3.9" evidence="1"/>
<dbReference type="EMBL" id="CP000266">
    <property type="protein sequence ID" value="ABF05298.1"/>
    <property type="molecule type" value="Genomic_DNA"/>
</dbReference>
<dbReference type="RefSeq" id="WP_001300570.1">
    <property type="nucleotide sequence ID" value="NC_008258.1"/>
</dbReference>
<dbReference type="SMR" id="Q0T067"/>
<dbReference type="KEGG" id="sfv:SFV_3248"/>
<dbReference type="HOGENOM" id="CLU_086300_0_0_6"/>
<dbReference type="UniPathway" id="UPA00629">
    <property type="reaction ID" value="UER00682"/>
</dbReference>
<dbReference type="Proteomes" id="UP000000659">
    <property type="component" value="Chromosome"/>
</dbReference>
<dbReference type="GO" id="GO:0005829">
    <property type="term" value="C:cytosol"/>
    <property type="evidence" value="ECO:0007669"/>
    <property type="project" value="TreeGrafter"/>
</dbReference>
<dbReference type="GO" id="GO:0047465">
    <property type="term" value="F:N-acylglucosamine-6-phosphate 2-epimerase activity"/>
    <property type="evidence" value="ECO:0007669"/>
    <property type="project" value="UniProtKB-EC"/>
</dbReference>
<dbReference type="GO" id="GO:0005975">
    <property type="term" value="P:carbohydrate metabolic process"/>
    <property type="evidence" value="ECO:0007669"/>
    <property type="project" value="UniProtKB-UniRule"/>
</dbReference>
<dbReference type="GO" id="GO:0006053">
    <property type="term" value="P:N-acetylmannosamine catabolic process"/>
    <property type="evidence" value="ECO:0007669"/>
    <property type="project" value="TreeGrafter"/>
</dbReference>
<dbReference type="GO" id="GO:0019262">
    <property type="term" value="P:N-acetylneuraminate catabolic process"/>
    <property type="evidence" value="ECO:0007669"/>
    <property type="project" value="UniProtKB-UniRule"/>
</dbReference>
<dbReference type="CDD" id="cd04729">
    <property type="entry name" value="NanE"/>
    <property type="match status" value="1"/>
</dbReference>
<dbReference type="FunFam" id="3.20.20.70:FF:000035">
    <property type="entry name" value="Putative N-acetylmannosamine-6-phosphate 2-epimerase"/>
    <property type="match status" value="1"/>
</dbReference>
<dbReference type="Gene3D" id="3.20.20.70">
    <property type="entry name" value="Aldolase class I"/>
    <property type="match status" value="1"/>
</dbReference>
<dbReference type="HAMAP" id="MF_01235">
    <property type="entry name" value="ManNAc6P_epimer"/>
    <property type="match status" value="1"/>
</dbReference>
<dbReference type="InterPro" id="IPR013785">
    <property type="entry name" value="Aldolase_TIM"/>
</dbReference>
<dbReference type="InterPro" id="IPR007260">
    <property type="entry name" value="NanE"/>
</dbReference>
<dbReference type="InterPro" id="IPR011060">
    <property type="entry name" value="RibuloseP-bd_barrel"/>
</dbReference>
<dbReference type="NCBIfam" id="NF002231">
    <property type="entry name" value="PRK01130.1"/>
    <property type="match status" value="1"/>
</dbReference>
<dbReference type="PANTHER" id="PTHR36204">
    <property type="entry name" value="N-ACETYLMANNOSAMINE-6-PHOSPHATE 2-EPIMERASE-RELATED"/>
    <property type="match status" value="1"/>
</dbReference>
<dbReference type="PANTHER" id="PTHR36204:SF1">
    <property type="entry name" value="N-ACETYLMANNOSAMINE-6-PHOSPHATE 2-EPIMERASE-RELATED"/>
    <property type="match status" value="1"/>
</dbReference>
<dbReference type="Pfam" id="PF04131">
    <property type="entry name" value="NanE"/>
    <property type="match status" value="1"/>
</dbReference>
<dbReference type="SUPFAM" id="SSF51366">
    <property type="entry name" value="Ribulose-phoshate binding barrel"/>
    <property type="match status" value="1"/>
</dbReference>
<gene>
    <name evidence="1" type="primary">nanE</name>
    <name type="ordered locus">SFV_3248</name>
</gene>